<protein>
    <recommendedName>
        <fullName>Otospiralin</fullName>
    </recommendedName>
</protein>
<reference key="1">
    <citation type="journal article" date="2002" name="J. Neurosci.">
        <title>Down regulation of otospiralin, a novel inner ear protein, causes hair cell degeneration and deafness.</title>
        <authorList>
            <person name="Delprat B."/>
            <person name="Boulanger A.M."/>
            <person name="Wang J."/>
            <person name="Beaudoin V."/>
            <person name="Guitton M.J."/>
            <person name="Venteo S."/>
            <person name="Dechesne C.J."/>
            <person name="Pujol R."/>
            <person name="Lavigne-Rebillard M."/>
            <person name="Puel J.-L."/>
            <person name="Hamel C.P."/>
        </authorList>
    </citation>
    <scope>NUCLEOTIDE SEQUENCE [MRNA]</scope>
    <scope>FUNCTION</scope>
</reference>
<comment type="function">
    <text evidence="2">May be essential for the survival of the neurosensory epithelium of the inner ear.</text>
</comment>
<comment type="subcellular location">
    <subcellularLocation>
        <location evidence="3">Secreted</location>
    </subcellularLocation>
</comment>
<comment type="tissue specificity">
    <text>Ear specific.</text>
</comment>
<comment type="similarity">
    <text evidence="3">Belongs to the otospiralin family.</text>
</comment>
<proteinExistence type="evidence at transcript level"/>
<name>OTOSP_CAVPO</name>
<dbReference type="EMBL" id="AY062255">
    <property type="protein sequence ID" value="AAL47488.1"/>
    <property type="molecule type" value="mRNA"/>
</dbReference>
<dbReference type="RefSeq" id="NP_001166464.1">
    <property type="nucleotide sequence ID" value="NM_001172993.1"/>
</dbReference>
<dbReference type="SMR" id="Q8K559"/>
<dbReference type="FunCoup" id="Q8K559">
    <property type="interactions" value="1"/>
</dbReference>
<dbReference type="STRING" id="10141.ENSCPOP00000022226"/>
<dbReference type="GeneID" id="100135590"/>
<dbReference type="KEGG" id="cpoc:100135590"/>
<dbReference type="CTD" id="150677"/>
<dbReference type="eggNOG" id="ENOG502S3R4">
    <property type="taxonomic scope" value="Eukaryota"/>
</dbReference>
<dbReference type="HOGENOM" id="CLU_170470_0_0_1"/>
<dbReference type="InParanoid" id="Q8K559"/>
<dbReference type="OrthoDB" id="8858469at2759"/>
<dbReference type="TreeFam" id="TF336889"/>
<dbReference type="Proteomes" id="UP000005447">
    <property type="component" value="Unassembled WGS sequence"/>
</dbReference>
<dbReference type="GO" id="GO:0005576">
    <property type="term" value="C:extracellular region"/>
    <property type="evidence" value="ECO:0007669"/>
    <property type="project" value="UniProtKB-SubCell"/>
</dbReference>
<dbReference type="GO" id="GO:0007605">
    <property type="term" value="P:sensory perception of sound"/>
    <property type="evidence" value="ECO:0007669"/>
    <property type="project" value="InterPro"/>
</dbReference>
<dbReference type="InterPro" id="IPR028224">
    <property type="entry name" value="Otospiralin"/>
</dbReference>
<dbReference type="PANTHER" id="PTHR35073">
    <property type="entry name" value="OTOSPIRALIN"/>
    <property type="match status" value="1"/>
</dbReference>
<dbReference type="PANTHER" id="PTHR35073:SF1">
    <property type="entry name" value="OTOSPIRALIN"/>
    <property type="match status" value="1"/>
</dbReference>
<dbReference type="Pfam" id="PF15182">
    <property type="entry name" value="OTOS"/>
    <property type="match status" value="1"/>
</dbReference>
<accession>Q8K559</accession>
<sequence length="88" mass="10025">MQACMVPGLALCLLLGSLTEAKPLQEYDPYAEPPAMPYWPFSTSDFWNYIQYLQTQGAYPQVEDLARTFFAHFPLGSTLGFHVPYQED</sequence>
<gene>
    <name type="primary">OTOS</name>
</gene>
<feature type="signal peptide" evidence="1">
    <location>
        <begin position="1"/>
        <end position="21"/>
    </location>
</feature>
<feature type="chain" id="PRO_0000021975" description="Otospiralin">
    <location>
        <begin position="22"/>
        <end position="88"/>
    </location>
</feature>
<keyword id="KW-1185">Reference proteome</keyword>
<keyword id="KW-0964">Secreted</keyword>
<keyword id="KW-0732">Signal</keyword>
<evidence type="ECO:0000255" key="1"/>
<evidence type="ECO:0000269" key="2">
    <source>
    </source>
</evidence>
<evidence type="ECO:0000305" key="3"/>
<organism>
    <name type="scientific">Cavia porcellus</name>
    <name type="common">Guinea pig</name>
    <dbReference type="NCBI Taxonomy" id="10141"/>
    <lineage>
        <taxon>Eukaryota</taxon>
        <taxon>Metazoa</taxon>
        <taxon>Chordata</taxon>
        <taxon>Craniata</taxon>
        <taxon>Vertebrata</taxon>
        <taxon>Euteleostomi</taxon>
        <taxon>Mammalia</taxon>
        <taxon>Eutheria</taxon>
        <taxon>Euarchontoglires</taxon>
        <taxon>Glires</taxon>
        <taxon>Rodentia</taxon>
        <taxon>Hystricomorpha</taxon>
        <taxon>Caviidae</taxon>
        <taxon>Cavia</taxon>
    </lineage>
</organism>